<organism>
    <name type="scientific">Arabidopsis thaliana</name>
    <name type="common">Mouse-ear cress</name>
    <dbReference type="NCBI Taxonomy" id="3702"/>
    <lineage>
        <taxon>Eukaryota</taxon>
        <taxon>Viridiplantae</taxon>
        <taxon>Streptophyta</taxon>
        <taxon>Embryophyta</taxon>
        <taxon>Tracheophyta</taxon>
        <taxon>Spermatophyta</taxon>
        <taxon>Magnoliopsida</taxon>
        <taxon>eudicotyledons</taxon>
        <taxon>Gunneridae</taxon>
        <taxon>Pentapetalae</taxon>
        <taxon>rosids</taxon>
        <taxon>malvids</taxon>
        <taxon>Brassicales</taxon>
        <taxon>Brassicaceae</taxon>
        <taxon>Camelineae</taxon>
        <taxon>Arabidopsis</taxon>
    </lineage>
</organism>
<proteinExistence type="evidence at protein level"/>
<accession>O80450</accession>
<accession>Q84QS1</accession>
<feature type="chain" id="PRO_0000401381" description="Trihelix transcription factor GT-3b">
    <location>
        <begin position="1"/>
        <end position="289"/>
    </location>
</feature>
<feature type="domain" description="Myb-like" evidence="2">
    <location>
        <begin position="42"/>
        <end position="98"/>
    </location>
</feature>
<feature type="region of interest" description="Disordered" evidence="3">
    <location>
        <begin position="137"/>
        <end position="200"/>
    </location>
</feature>
<feature type="coiled-coil region" evidence="1">
    <location>
        <begin position="223"/>
        <end position="275"/>
    </location>
</feature>
<feature type="short sequence motif" description="Bipartite nuclear localization signal" evidence="1">
    <location>
        <begin position="65"/>
        <end position="81"/>
    </location>
</feature>
<feature type="short sequence motif" description="Nuclear localization signal" evidence="1">
    <location>
        <begin position="179"/>
        <end position="188"/>
    </location>
</feature>
<feature type="compositionally biased region" description="Acidic residues" evidence="3">
    <location>
        <begin position="156"/>
        <end position="168"/>
    </location>
</feature>
<feature type="compositionally biased region" description="Low complexity" evidence="3">
    <location>
        <begin position="190"/>
        <end position="199"/>
    </location>
</feature>
<feature type="sequence conflict" description="In Ref. 1; AAP13348." evidence="6" ref="1">
    <original>H</original>
    <variation>P</variation>
    <location>
        <position position="7"/>
    </location>
</feature>
<feature type="sequence conflict" description="In Ref. 1; AAP13348." evidence="6" ref="1">
    <original>V</original>
    <variation>A</variation>
    <location>
        <position position="163"/>
    </location>
</feature>
<reference key="1">
    <citation type="journal article" date="2004" name="FEBS Lett.">
        <title>Analysis of GT-3a identifies a distinct subgroup of trihelix DNA-binding transcription factors in Arabidopsis.</title>
        <authorList>
            <person name="Ayadi M."/>
            <person name="Delaporte V."/>
            <person name="Li Y.F."/>
            <person name="Zhou D.X."/>
        </authorList>
    </citation>
    <scope>NUCLEOTIDE SEQUENCE [MRNA]</scope>
    <scope>INTERACTION WITH GT-3A</scope>
    <source>
        <strain>cv. Columbia</strain>
    </source>
</reference>
<reference key="2">
    <citation type="journal article" date="2004" name="Plant Physiol.">
        <title>Pathogen- and NaCl-induced expression of the SCaM-4 promoter is mediated in part by a GT-1 box that interacts with a GT-1-like transcription factor.</title>
        <authorList>
            <person name="Park H.C."/>
            <person name="Kim M.L."/>
            <person name="Kang Y.H."/>
            <person name="Jeon J.M."/>
            <person name="Yoo J.H."/>
            <person name="Kim M.C."/>
            <person name="Park C.Y."/>
            <person name="Jeong J.C."/>
            <person name="Moon B.C."/>
            <person name="Lee J.H."/>
            <person name="Yoon H.W."/>
            <person name="Lee S.H."/>
            <person name="Chung W.S."/>
            <person name="Lim C.O."/>
            <person name="Lee S.Y."/>
            <person name="Hong J.C."/>
            <person name="Cho M.J."/>
        </authorList>
    </citation>
    <scope>NUCLEOTIDE SEQUENCE [MRNA]</scope>
    <scope>FUNCTION</scope>
    <scope>INDUCTION</scope>
</reference>
<reference key="3">
    <citation type="journal article" date="1999" name="Nature">
        <title>Sequence and analysis of chromosome 2 of the plant Arabidopsis thaliana.</title>
        <authorList>
            <person name="Lin X."/>
            <person name="Kaul S."/>
            <person name="Rounsley S.D."/>
            <person name="Shea T.P."/>
            <person name="Benito M.-I."/>
            <person name="Town C.D."/>
            <person name="Fujii C.Y."/>
            <person name="Mason T.M."/>
            <person name="Bowman C.L."/>
            <person name="Barnstead M.E."/>
            <person name="Feldblyum T.V."/>
            <person name="Buell C.R."/>
            <person name="Ketchum K.A."/>
            <person name="Lee J.J."/>
            <person name="Ronning C.M."/>
            <person name="Koo H.L."/>
            <person name="Moffat K.S."/>
            <person name="Cronin L.A."/>
            <person name="Shen M."/>
            <person name="Pai G."/>
            <person name="Van Aken S."/>
            <person name="Umayam L."/>
            <person name="Tallon L.J."/>
            <person name="Gill J.E."/>
            <person name="Adams M.D."/>
            <person name="Carrera A.J."/>
            <person name="Creasy T.H."/>
            <person name="Goodman H.M."/>
            <person name="Somerville C.R."/>
            <person name="Copenhaver G.P."/>
            <person name="Preuss D."/>
            <person name="Nierman W.C."/>
            <person name="White O."/>
            <person name="Eisen J.A."/>
            <person name="Salzberg S.L."/>
            <person name="Fraser C.M."/>
            <person name="Venter J.C."/>
        </authorList>
    </citation>
    <scope>NUCLEOTIDE SEQUENCE [LARGE SCALE GENOMIC DNA]</scope>
    <source>
        <strain>cv. Columbia</strain>
    </source>
</reference>
<reference key="4">
    <citation type="journal article" date="2017" name="Plant J.">
        <title>Araport11: a complete reannotation of the Arabidopsis thaliana reference genome.</title>
        <authorList>
            <person name="Cheng C.Y."/>
            <person name="Krishnakumar V."/>
            <person name="Chan A.P."/>
            <person name="Thibaud-Nissen F."/>
            <person name="Schobel S."/>
            <person name="Town C.D."/>
        </authorList>
    </citation>
    <scope>GENOME REANNOTATION</scope>
    <source>
        <strain>cv. Columbia</strain>
    </source>
</reference>
<reference key="5">
    <citation type="journal article" date="2007" name="Mol. Cell">
        <title>Purification of a plant mediator from Arabidopsis thaliana identifies PFT1 as the Med25 subunit.</title>
        <authorList>
            <person name="Baeckstroem S."/>
            <person name="Elfving N."/>
            <person name="Nilsson R."/>
            <person name="Wingsle G."/>
            <person name="Bjoerklund S."/>
        </authorList>
    </citation>
    <scope>IDENTIFICATION BY MASS SPECTROMETRY</scope>
    <scope>SUBUNIT</scope>
</reference>
<evidence type="ECO:0000255" key="1"/>
<evidence type="ECO:0000255" key="2">
    <source>
        <dbReference type="PROSITE-ProRule" id="PRU00133"/>
    </source>
</evidence>
<evidence type="ECO:0000256" key="3">
    <source>
        <dbReference type="SAM" id="MobiDB-lite"/>
    </source>
</evidence>
<evidence type="ECO:0000269" key="4">
    <source>
    </source>
</evidence>
<evidence type="ECO:0000269" key="5">
    <source>
    </source>
</evidence>
<evidence type="ECO:0000305" key="6"/>
<name>TGT3B_ARATH</name>
<dbReference type="EMBL" id="AY271678">
    <property type="protein sequence ID" value="AAP13348.1"/>
    <property type="molecule type" value="mRNA"/>
</dbReference>
<dbReference type="EMBL" id="AF453582">
    <property type="protein sequence ID" value="AAL50816.1"/>
    <property type="molecule type" value="mRNA"/>
</dbReference>
<dbReference type="EMBL" id="AC003028">
    <property type="protein sequence ID" value="AAC27174.1"/>
    <property type="molecule type" value="Genomic_DNA"/>
</dbReference>
<dbReference type="EMBL" id="CP002685">
    <property type="protein sequence ID" value="AEC09513.1"/>
    <property type="molecule type" value="Genomic_DNA"/>
</dbReference>
<dbReference type="PIR" id="T01257">
    <property type="entry name" value="T01257"/>
</dbReference>
<dbReference type="RefSeq" id="NP_181360.1">
    <property type="nucleotide sequence ID" value="NM_129382.3"/>
</dbReference>
<dbReference type="SMR" id="O80450"/>
<dbReference type="BioGRID" id="3746">
    <property type="interactions" value="28"/>
</dbReference>
<dbReference type="FunCoup" id="O80450">
    <property type="interactions" value="59"/>
</dbReference>
<dbReference type="IntAct" id="O80450">
    <property type="interactions" value="24"/>
</dbReference>
<dbReference type="STRING" id="3702.O80450"/>
<dbReference type="iPTMnet" id="O80450"/>
<dbReference type="PaxDb" id="3702-AT2G38250.1"/>
<dbReference type="ProteomicsDB" id="246413"/>
<dbReference type="EnsemblPlants" id="AT2G38250.1">
    <property type="protein sequence ID" value="AT2G38250.1"/>
    <property type="gene ID" value="AT2G38250"/>
</dbReference>
<dbReference type="GeneID" id="818404"/>
<dbReference type="Gramene" id="AT2G38250.1">
    <property type="protein sequence ID" value="AT2G38250.1"/>
    <property type="gene ID" value="AT2G38250"/>
</dbReference>
<dbReference type="KEGG" id="ath:AT2G38250"/>
<dbReference type="Araport" id="AT2G38250"/>
<dbReference type="TAIR" id="AT2G38250"/>
<dbReference type="eggNOG" id="KOG4282">
    <property type="taxonomic scope" value="Eukaryota"/>
</dbReference>
<dbReference type="HOGENOM" id="CLU_063336_1_0_1"/>
<dbReference type="InParanoid" id="O80450"/>
<dbReference type="OMA" id="HHPHNIT"/>
<dbReference type="OrthoDB" id="691673at2759"/>
<dbReference type="CD-CODE" id="4299E36E">
    <property type="entry name" value="Nucleolus"/>
</dbReference>
<dbReference type="PRO" id="PR:O80450"/>
<dbReference type="Proteomes" id="UP000006548">
    <property type="component" value="Chromosome 2"/>
</dbReference>
<dbReference type="ExpressionAtlas" id="O80450">
    <property type="expression patterns" value="baseline and differential"/>
</dbReference>
<dbReference type="GO" id="GO:0016592">
    <property type="term" value="C:mediator complex"/>
    <property type="evidence" value="ECO:0000314"/>
    <property type="project" value="UniProtKB"/>
</dbReference>
<dbReference type="GO" id="GO:0005730">
    <property type="term" value="C:nucleolus"/>
    <property type="evidence" value="ECO:0007005"/>
    <property type="project" value="TAIR"/>
</dbReference>
<dbReference type="GO" id="GO:0005634">
    <property type="term" value="C:nucleus"/>
    <property type="evidence" value="ECO:0000314"/>
    <property type="project" value="TAIR"/>
</dbReference>
<dbReference type="GO" id="GO:0003677">
    <property type="term" value="F:DNA binding"/>
    <property type="evidence" value="ECO:0007669"/>
    <property type="project" value="UniProtKB-KW"/>
</dbReference>
<dbReference type="GO" id="GO:0003700">
    <property type="term" value="F:DNA-binding transcription factor activity"/>
    <property type="evidence" value="ECO:0000250"/>
    <property type="project" value="TAIR"/>
</dbReference>
<dbReference type="GO" id="GO:0006355">
    <property type="term" value="P:regulation of DNA-templated transcription"/>
    <property type="evidence" value="ECO:0000304"/>
    <property type="project" value="TAIR"/>
</dbReference>
<dbReference type="CDD" id="cd12203">
    <property type="entry name" value="GT1"/>
    <property type="match status" value="1"/>
</dbReference>
<dbReference type="FunFam" id="1.10.10.60:FF:000032">
    <property type="entry name" value="Zinc finger and SCAN domain-containing 20"/>
    <property type="match status" value="1"/>
</dbReference>
<dbReference type="Gene3D" id="1.10.10.60">
    <property type="entry name" value="Homeodomain-like"/>
    <property type="match status" value="1"/>
</dbReference>
<dbReference type="InterPro" id="IPR044822">
    <property type="entry name" value="Myb_DNA-bind_4"/>
</dbReference>
<dbReference type="InterPro" id="IPR001005">
    <property type="entry name" value="SANT/Myb"/>
</dbReference>
<dbReference type="PANTHER" id="PTHR21654">
    <property type="entry name" value="FI21293P1"/>
    <property type="match status" value="1"/>
</dbReference>
<dbReference type="PANTHER" id="PTHR21654:SF66">
    <property type="entry name" value="TRIHELIX TRANSCRIPTION FACTOR GT-3B"/>
    <property type="match status" value="1"/>
</dbReference>
<dbReference type="Pfam" id="PF13837">
    <property type="entry name" value="Myb_DNA-bind_4"/>
    <property type="match status" value="1"/>
</dbReference>
<dbReference type="SMART" id="SM00717">
    <property type="entry name" value="SANT"/>
    <property type="match status" value="1"/>
</dbReference>
<dbReference type="PROSITE" id="PS50090">
    <property type="entry name" value="MYB_LIKE"/>
    <property type="match status" value="1"/>
</dbReference>
<sequence>MDGHQHHHLHQLQYLNKHHLHTQSQTPEIASPVAVGDRFPQWSVEETKELIGIRGELDQTFMETKRNKLLWEVISNKMRDKSFPRSPEQCKCKWKNLVTRFKGCETMEAETARQQFPFYDDMQNIFTTRMQRMLWAESEGGGGGTSGAARKREYSSDEEEENVNEELVDVSNDPKILNPKKNIAKKRKGGSNSSNSNNGVREVLEEFMRHQVRMESEWREGWEAREKERAEKEEEWRRKMEELEKERLAMERMWRDREEQRRSREEMRAEKRDSLINALLAKLTRDGSL</sequence>
<comment type="function">
    <text evidence="4">Probable transcription factor that may play a role in the induction of CAM4 in response to pathogen and salt.</text>
</comment>
<comment type="subunit">
    <text evidence="5">Heterodimer with GT-3A. Associated with the mediator complex.</text>
</comment>
<comment type="interaction">
    <interactant intactId="EBI-1571089">
        <id>O80450</id>
    </interactant>
    <interactant intactId="EBI-15192535">
        <id>F4JI72</id>
        <label>At4g03250</label>
    </interactant>
    <organismsDiffer>false</organismsDiffer>
    <experiments>3</experiments>
</comment>
<comment type="interaction">
    <interactant intactId="EBI-1571089">
        <id>O80450</id>
    </interactant>
    <interactant intactId="EBI-25522944">
        <id>Q9ZT48</id>
        <label>ATE1</label>
    </interactant>
    <organismsDiffer>false</organismsDiffer>
    <experiments>3</experiments>
</comment>
<comment type="interaction">
    <interactant intactId="EBI-1571089">
        <id>O80450</id>
    </interactant>
    <interactant intactId="EBI-15191747">
        <id>Q9SFV2</id>
        <label>FHA2</label>
    </interactant>
    <organismsDiffer>false</organismsDiffer>
    <experiments>3</experiments>
</comment>
<comment type="interaction">
    <interactant intactId="EBI-1571089">
        <id>O80450</id>
    </interactant>
    <interactant intactId="EBI-15194797">
        <id>Q9LR91</id>
        <label>GNAT5</label>
    </interactant>
    <organismsDiffer>false</organismsDiffer>
    <experiments>3</experiments>
</comment>
<comment type="interaction">
    <interactant intactId="EBI-1571089">
        <id>O80450</id>
    </interactant>
    <interactant intactId="EBI-17061436">
        <id>O80961</id>
        <label>MLO12</label>
    </interactant>
    <organismsDiffer>false</organismsDiffer>
    <experiments>3</experiments>
</comment>
<comment type="interaction">
    <interactant intactId="EBI-1571089">
        <id>O80450</id>
    </interactant>
    <interactant intactId="EBI-25523050">
        <id>Q9LSI7</id>
        <label>MYB35</label>
    </interactant>
    <organismsDiffer>false</organismsDiffer>
    <experiments>3</experiments>
</comment>
<comment type="subcellular location">
    <subcellularLocation>
        <location evidence="6">Nucleus</location>
    </subcellularLocation>
</comment>
<comment type="induction">
    <text evidence="4">By salt and infection with the bacterial pathogen P.syringae pv tomato.</text>
</comment>
<keyword id="KW-0175">Coiled coil</keyword>
<keyword id="KW-0238">DNA-binding</keyword>
<keyword id="KW-0539">Nucleus</keyword>
<keyword id="KW-1185">Reference proteome</keyword>
<keyword id="KW-0804">Transcription</keyword>
<keyword id="KW-0805">Transcription regulation</keyword>
<protein>
    <recommendedName>
        <fullName>Trihelix transcription factor GT-3b</fullName>
    </recommendedName>
    <alternativeName>
        <fullName>Transcription factor GT-1-like</fullName>
    </alternativeName>
    <alternativeName>
        <fullName>Trihelix DNA-binding protein GT-3b</fullName>
    </alternativeName>
</protein>
<gene>
    <name type="primary">GT-3B</name>
    <name type="synonym">GT1L</name>
    <name type="synonym">GT3B</name>
    <name type="ordered locus">At2g38250</name>
    <name type="ORF">F16M14.18</name>
</gene>